<keyword id="KW-0963">Cytoplasm</keyword>
<keyword id="KW-0328">Glycosyltransferase</keyword>
<keyword id="KW-0660">Purine salvage</keyword>
<keyword id="KW-1185">Reference proteome</keyword>
<keyword id="KW-0808">Transferase</keyword>
<accession>Q24UQ1</accession>
<comment type="function">
    <text evidence="1">Catalyzes a salvage reaction resulting in the formation of AMP, that is energically less costly than de novo synthesis.</text>
</comment>
<comment type="catalytic activity">
    <reaction evidence="1">
        <text>AMP + diphosphate = 5-phospho-alpha-D-ribose 1-diphosphate + adenine</text>
        <dbReference type="Rhea" id="RHEA:16609"/>
        <dbReference type="ChEBI" id="CHEBI:16708"/>
        <dbReference type="ChEBI" id="CHEBI:33019"/>
        <dbReference type="ChEBI" id="CHEBI:58017"/>
        <dbReference type="ChEBI" id="CHEBI:456215"/>
        <dbReference type="EC" id="2.4.2.7"/>
    </reaction>
</comment>
<comment type="pathway">
    <text evidence="1">Purine metabolism; AMP biosynthesis via salvage pathway; AMP from adenine: step 1/1.</text>
</comment>
<comment type="subunit">
    <text evidence="1">Homodimer.</text>
</comment>
<comment type="subcellular location">
    <subcellularLocation>
        <location evidence="1">Cytoplasm</location>
    </subcellularLocation>
</comment>
<comment type="similarity">
    <text evidence="1">Belongs to the purine/pyrimidine phosphoribosyltransferase family.</text>
</comment>
<organism>
    <name type="scientific">Desulfitobacterium hafniense (strain Y51)</name>
    <dbReference type="NCBI Taxonomy" id="138119"/>
    <lineage>
        <taxon>Bacteria</taxon>
        <taxon>Bacillati</taxon>
        <taxon>Bacillota</taxon>
        <taxon>Clostridia</taxon>
        <taxon>Eubacteriales</taxon>
        <taxon>Desulfitobacteriaceae</taxon>
        <taxon>Desulfitobacterium</taxon>
    </lineage>
</organism>
<name>APT_DESHY</name>
<protein>
    <recommendedName>
        <fullName evidence="1">Adenine phosphoribosyltransferase</fullName>
        <shortName evidence="1">APRT</shortName>
        <ecNumber evidence="1">2.4.2.7</ecNumber>
    </recommendedName>
</protein>
<evidence type="ECO:0000255" key="1">
    <source>
        <dbReference type="HAMAP-Rule" id="MF_00004"/>
    </source>
</evidence>
<reference key="1">
    <citation type="journal article" date="2006" name="J. Bacteriol.">
        <title>Complete genome sequence of the dehalorespiring bacterium Desulfitobacterium hafniense Y51 and comparison with Dehalococcoides ethenogenes 195.</title>
        <authorList>
            <person name="Nonaka H."/>
            <person name="Keresztes G."/>
            <person name="Shinoda Y."/>
            <person name="Ikenaga Y."/>
            <person name="Abe M."/>
            <person name="Naito K."/>
            <person name="Inatomi K."/>
            <person name="Furukawa K."/>
            <person name="Inui M."/>
            <person name="Yukawa H."/>
        </authorList>
    </citation>
    <scope>NUCLEOTIDE SEQUENCE [LARGE SCALE GENOMIC DNA]</scope>
    <source>
        <strain>Y51</strain>
    </source>
</reference>
<proteinExistence type="inferred from homology"/>
<gene>
    <name evidence="1" type="primary">apt</name>
    <name type="ordered locus">DSY2452</name>
</gene>
<feature type="chain" id="PRO_1000000279" description="Adenine phosphoribosyltransferase">
    <location>
        <begin position="1"/>
        <end position="173"/>
    </location>
</feature>
<sequence>MKALDFDKYIRVIDDFPKPGISFKDITTLLKDGEAYRAAVDAIVERVRESQPDLIVGPEARGFLLGAPVAYALGIGFVPVRKPGKLPGKTVSETYELEYGSDTLEVHADAIQPGQRIAIVDDLLATGGTTSATARLIEKTGAQVAGMSFLIELGFLEGRKRLEGYEVFSLIKY</sequence>
<dbReference type="EC" id="2.4.2.7" evidence="1"/>
<dbReference type="EMBL" id="AP008230">
    <property type="protein sequence ID" value="BAE84241.1"/>
    <property type="molecule type" value="Genomic_DNA"/>
</dbReference>
<dbReference type="RefSeq" id="WP_011460351.1">
    <property type="nucleotide sequence ID" value="NC_007907.1"/>
</dbReference>
<dbReference type="SMR" id="Q24UQ1"/>
<dbReference type="STRING" id="138119.DSY2452"/>
<dbReference type="KEGG" id="dsy:DSY2452"/>
<dbReference type="eggNOG" id="COG0503">
    <property type="taxonomic scope" value="Bacteria"/>
</dbReference>
<dbReference type="HOGENOM" id="CLU_063339_3_0_9"/>
<dbReference type="UniPathway" id="UPA00588">
    <property type="reaction ID" value="UER00646"/>
</dbReference>
<dbReference type="Proteomes" id="UP000001946">
    <property type="component" value="Chromosome"/>
</dbReference>
<dbReference type="GO" id="GO:0005737">
    <property type="term" value="C:cytoplasm"/>
    <property type="evidence" value="ECO:0007669"/>
    <property type="project" value="UniProtKB-SubCell"/>
</dbReference>
<dbReference type="GO" id="GO:0002055">
    <property type="term" value="F:adenine binding"/>
    <property type="evidence" value="ECO:0007669"/>
    <property type="project" value="TreeGrafter"/>
</dbReference>
<dbReference type="GO" id="GO:0003999">
    <property type="term" value="F:adenine phosphoribosyltransferase activity"/>
    <property type="evidence" value="ECO:0007669"/>
    <property type="project" value="UniProtKB-UniRule"/>
</dbReference>
<dbReference type="GO" id="GO:0016208">
    <property type="term" value="F:AMP binding"/>
    <property type="evidence" value="ECO:0007669"/>
    <property type="project" value="TreeGrafter"/>
</dbReference>
<dbReference type="GO" id="GO:0006168">
    <property type="term" value="P:adenine salvage"/>
    <property type="evidence" value="ECO:0007669"/>
    <property type="project" value="InterPro"/>
</dbReference>
<dbReference type="GO" id="GO:0044209">
    <property type="term" value="P:AMP salvage"/>
    <property type="evidence" value="ECO:0007669"/>
    <property type="project" value="UniProtKB-UniRule"/>
</dbReference>
<dbReference type="GO" id="GO:0006166">
    <property type="term" value="P:purine ribonucleoside salvage"/>
    <property type="evidence" value="ECO:0007669"/>
    <property type="project" value="UniProtKB-KW"/>
</dbReference>
<dbReference type="CDD" id="cd06223">
    <property type="entry name" value="PRTases_typeI"/>
    <property type="match status" value="1"/>
</dbReference>
<dbReference type="FunFam" id="3.40.50.2020:FF:000004">
    <property type="entry name" value="Adenine phosphoribosyltransferase"/>
    <property type="match status" value="1"/>
</dbReference>
<dbReference type="Gene3D" id="3.40.50.2020">
    <property type="match status" value="1"/>
</dbReference>
<dbReference type="HAMAP" id="MF_00004">
    <property type="entry name" value="Aden_phosphoribosyltr"/>
    <property type="match status" value="1"/>
</dbReference>
<dbReference type="InterPro" id="IPR005764">
    <property type="entry name" value="Ade_phspho_trans"/>
</dbReference>
<dbReference type="InterPro" id="IPR000836">
    <property type="entry name" value="PRibTrfase_dom"/>
</dbReference>
<dbReference type="InterPro" id="IPR029057">
    <property type="entry name" value="PRTase-like"/>
</dbReference>
<dbReference type="InterPro" id="IPR050054">
    <property type="entry name" value="UPRTase/APRTase"/>
</dbReference>
<dbReference type="NCBIfam" id="TIGR01090">
    <property type="entry name" value="apt"/>
    <property type="match status" value="1"/>
</dbReference>
<dbReference type="NCBIfam" id="NF002633">
    <property type="entry name" value="PRK02304.1-2"/>
    <property type="match status" value="1"/>
</dbReference>
<dbReference type="NCBIfam" id="NF002634">
    <property type="entry name" value="PRK02304.1-3"/>
    <property type="match status" value="1"/>
</dbReference>
<dbReference type="NCBIfam" id="NF002636">
    <property type="entry name" value="PRK02304.1-5"/>
    <property type="match status" value="1"/>
</dbReference>
<dbReference type="PANTHER" id="PTHR32315">
    <property type="entry name" value="ADENINE PHOSPHORIBOSYLTRANSFERASE"/>
    <property type="match status" value="1"/>
</dbReference>
<dbReference type="PANTHER" id="PTHR32315:SF3">
    <property type="entry name" value="ADENINE PHOSPHORIBOSYLTRANSFERASE"/>
    <property type="match status" value="1"/>
</dbReference>
<dbReference type="Pfam" id="PF00156">
    <property type="entry name" value="Pribosyltran"/>
    <property type="match status" value="1"/>
</dbReference>
<dbReference type="SUPFAM" id="SSF53271">
    <property type="entry name" value="PRTase-like"/>
    <property type="match status" value="1"/>
</dbReference>